<feature type="signal peptide" evidence="1">
    <location>
        <begin position="1"/>
        <end position="25"/>
    </location>
</feature>
<feature type="chain" id="PRO_0000021051" description="Amidase enhancer">
    <location>
        <begin position="26"/>
        <end position="705"/>
    </location>
</feature>
<feature type="repeat" description="1">
    <location>
        <begin position="64"/>
        <end position="161"/>
    </location>
</feature>
<feature type="repeat" description="2">
    <location>
        <begin position="162"/>
        <end position="251"/>
    </location>
</feature>
<feature type="repeat" description="3">
    <location>
        <begin position="252"/>
        <end position="349"/>
    </location>
</feature>
<feature type="region of interest" description="3 X tandem repeats">
    <location>
        <begin position="64"/>
        <end position="349"/>
    </location>
</feature>
<gene>
    <name type="primary">lytB</name>
    <name type="synonym">cwbA</name>
    <name type="ordered locus">BSU35630</name>
</gene>
<dbReference type="EMBL" id="M87645">
    <property type="protein sequence ID" value="AAA22580.1"/>
    <property type="molecule type" value="Genomic_DNA"/>
</dbReference>
<dbReference type="EMBL" id="D10388">
    <property type="protein sequence ID" value="BAA01224.1"/>
    <property type="molecule type" value="Genomic_DNA"/>
</dbReference>
<dbReference type="EMBL" id="AL009126">
    <property type="protein sequence ID" value="CAB15580.1"/>
    <property type="molecule type" value="Genomic_DNA"/>
</dbReference>
<dbReference type="PIR" id="A41322">
    <property type="entry name" value="A41322"/>
</dbReference>
<dbReference type="RefSeq" id="NP_391443.1">
    <property type="nucleotide sequence ID" value="NC_000964.3"/>
</dbReference>
<dbReference type="RefSeq" id="WP_003243620.1">
    <property type="nucleotide sequence ID" value="NZ_OZ025638.1"/>
</dbReference>
<dbReference type="SMR" id="Q02113"/>
<dbReference type="FunCoup" id="Q02113">
    <property type="interactions" value="62"/>
</dbReference>
<dbReference type="STRING" id="224308.BSU35630"/>
<dbReference type="PaxDb" id="224308-BSU35630"/>
<dbReference type="EnsemblBacteria" id="CAB15580">
    <property type="protein sequence ID" value="CAB15580"/>
    <property type="gene ID" value="BSU_35630"/>
</dbReference>
<dbReference type="GeneID" id="936795"/>
<dbReference type="KEGG" id="bsu:BSU35630"/>
<dbReference type="PATRIC" id="fig|224308.179.peg.3854"/>
<dbReference type="eggNOG" id="COG2247">
    <property type="taxonomic scope" value="Bacteria"/>
</dbReference>
<dbReference type="eggNOG" id="COG2385">
    <property type="taxonomic scope" value="Bacteria"/>
</dbReference>
<dbReference type="InParanoid" id="Q02113"/>
<dbReference type="OrthoDB" id="9794671at2"/>
<dbReference type="BioCyc" id="BSUB:BSU35630-MONOMER"/>
<dbReference type="Proteomes" id="UP000001570">
    <property type="component" value="Chromosome"/>
</dbReference>
<dbReference type="GO" id="GO:0005576">
    <property type="term" value="C:extracellular region"/>
    <property type="evidence" value="ECO:0007669"/>
    <property type="project" value="UniProtKB-KW"/>
</dbReference>
<dbReference type="GO" id="GO:0005886">
    <property type="term" value="C:plasma membrane"/>
    <property type="evidence" value="ECO:0007669"/>
    <property type="project" value="UniProtKB-SubCell"/>
</dbReference>
<dbReference type="GO" id="GO:0071555">
    <property type="term" value="P:cell wall organization"/>
    <property type="evidence" value="ECO:0007669"/>
    <property type="project" value="UniProtKB-KW"/>
</dbReference>
<dbReference type="GO" id="GO:0030435">
    <property type="term" value="P:sporulation resulting in formation of a cellular spore"/>
    <property type="evidence" value="ECO:0007669"/>
    <property type="project" value="InterPro"/>
</dbReference>
<dbReference type="Gene3D" id="3.40.50.12090">
    <property type="match status" value="2"/>
</dbReference>
<dbReference type="InterPro" id="IPR051922">
    <property type="entry name" value="Bact_Sporulation_Assoc"/>
</dbReference>
<dbReference type="InterPro" id="IPR007253">
    <property type="entry name" value="Cell_wall-bd_2"/>
</dbReference>
<dbReference type="InterPro" id="IPR013486">
    <property type="entry name" value="SpoIID/LytB"/>
</dbReference>
<dbReference type="InterPro" id="IPR013693">
    <property type="entry name" value="SpoIID/LytB_N"/>
</dbReference>
<dbReference type="NCBIfam" id="TIGR02669">
    <property type="entry name" value="SpoIID_LytB"/>
    <property type="match status" value="1"/>
</dbReference>
<dbReference type="PANTHER" id="PTHR30032:SF4">
    <property type="entry name" value="AMIDASE ENHANCER"/>
    <property type="match status" value="1"/>
</dbReference>
<dbReference type="PANTHER" id="PTHR30032">
    <property type="entry name" value="N-ACETYLMURAMOYL-L-ALANINE AMIDASE-RELATED"/>
    <property type="match status" value="1"/>
</dbReference>
<dbReference type="Pfam" id="PF04122">
    <property type="entry name" value="CW_binding_2"/>
    <property type="match status" value="3"/>
</dbReference>
<dbReference type="Pfam" id="PF08486">
    <property type="entry name" value="SpoIID"/>
    <property type="match status" value="1"/>
</dbReference>
<protein>
    <recommendedName>
        <fullName>Amidase enhancer</fullName>
    </recommendedName>
    <alternativeName>
        <fullName>Cell wall-associated polypeptide CWBP76</fullName>
        <shortName>CWBP76</shortName>
    </alternativeName>
    <alternativeName>
        <fullName>Modifier protein of major autolysin</fullName>
    </alternativeName>
</protein>
<evidence type="ECO:0000269" key="1">
    <source>
    </source>
</evidence>
<evidence type="ECO:0000269" key="2">
    <source>
    </source>
</evidence>
<accession>Q02113</accession>
<proteinExistence type="evidence at protein level"/>
<comment type="function">
    <text>Possibly involved in cell wall metabolism during spore formation. Enhances the amidase activity approximately threefold.</text>
</comment>
<comment type="subcellular location">
    <subcellularLocation>
        <location evidence="1">Cell membrane</location>
        <topology evidence="1">Peripheral membrane protein</topology>
    </subcellularLocation>
    <subcellularLocation>
        <location evidence="1">Secreted</location>
        <location evidence="1">Cell wall</location>
    </subcellularLocation>
    <text>Cell wall localization shown in PubMed:11987133.</text>
</comment>
<comment type="induction">
    <text evidence="1 2">In stationary phase; under control of SigD (PubMed:11987133). Repressed by LytR.</text>
</comment>
<reference key="1">
    <citation type="journal article" date="1992" name="J. Gen. Microbiol.">
        <title>Sequencing and analysis of the Bacillus subtilis lytRABC divergon: a regulatory unit encompassing the structural genes of the N-acetylmuramoyl-L-alanine amidase and its modifier.</title>
        <authorList>
            <person name="Lazarevic V."/>
            <person name="Margot P."/>
            <person name="Soldo B."/>
            <person name="Karamata D."/>
        </authorList>
    </citation>
    <scope>NUCLEOTIDE SEQUENCE [GENOMIC DNA]</scope>
    <scope>REPRESSION BY LYTR</scope>
    <source>
        <strain>168</strain>
    </source>
</reference>
<reference key="2">
    <citation type="journal article" date="1992" name="J. Gen. Microbiol.">
        <title>Molecular cloning and sequencing of the upstream region of the major Bacillus subtilis autolysin gene: a modifier protein exhibiting sequence homology to the major autolysin and the spoIID product.</title>
        <authorList>
            <person name="Kuroda A."/>
            <person name="Rashid H.M."/>
            <person name="Sekiguchi J."/>
        </authorList>
    </citation>
    <scope>NUCLEOTIDE SEQUENCE [GENOMIC DNA]</scope>
    <scope>PARTIAL PROTEIN SEQUENCE</scope>
</reference>
<reference key="3">
    <citation type="journal article" date="1997" name="Nature">
        <title>The complete genome sequence of the Gram-positive bacterium Bacillus subtilis.</title>
        <authorList>
            <person name="Kunst F."/>
            <person name="Ogasawara N."/>
            <person name="Moszer I."/>
            <person name="Albertini A.M."/>
            <person name="Alloni G."/>
            <person name="Azevedo V."/>
            <person name="Bertero M.G."/>
            <person name="Bessieres P."/>
            <person name="Bolotin A."/>
            <person name="Borchert S."/>
            <person name="Borriss R."/>
            <person name="Boursier L."/>
            <person name="Brans A."/>
            <person name="Braun M."/>
            <person name="Brignell S.C."/>
            <person name="Bron S."/>
            <person name="Brouillet S."/>
            <person name="Bruschi C.V."/>
            <person name="Caldwell B."/>
            <person name="Capuano V."/>
            <person name="Carter N.M."/>
            <person name="Choi S.-K."/>
            <person name="Codani J.-J."/>
            <person name="Connerton I.F."/>
            <person name="Cummings N.J."/>
            <person name="Daniel R.A."/>
            <person name="Denizot F."/>
            <person name="Devine K.M."/>
            <person name="Duesterhoeft A."/>
            <person name="Ehrlich S.D."/>
            <person name="Emmerson P.T."/>
            <person name="Entian K.-D."/>
            <person name="Errington J."/>
            <person name="Fabret C."/>
            <person name="Ferrari E."/>
            <person name="Foulger D."/>
            <person name="Fritz C."/>
            <person name="Fujita M."/>
            <person name="Fujita Y."/>
            <person name="Fuma S."/>
            <person name="Galizzi A."/>
            <person name="Galleron N."/>
            <person name="Ghim S.-Y."/>
            <person name="Glaser P."/>
            <person name="Goffeau A."/>
            <person name="Golightly E.J."/>
            <person name="Grandi G."/>
            <person name="Guiseppi G."/>
            <person name="Guy B.J."/>
            <person name="Haga K."/>
            <person name="Haiech J."/>
            <person name="Harwood C.R."/>
            <person name="Henaut A."/>
            <person name="Hilbert H."/>
            <person name="Holsappel S."/>
            <person name="Hosono S."/>
            <person name="Hullo M.-F."/>
            <person name="Itaya M."/>
            <person name="Jones L.-M."/>
            <person name="Joris B."/>
            <person name="Karamata D."/>
            <person name="Kasahara Y."/>
            <person name="Klaerr-Blanchard M."/>
            <person name="Klein C."/>
            <person name="Kobayashi Y."/>
            <person name="Koetter P."/>
            <person name="Koningstein G."/>
            <person name="Krogh S."/>
            <person name="Kumano M."/>
            <person name="Kurita K."/>
            <person name="Lapidus A."/>
            <person name="Lardinois S."/>
            <person name="Lauber J."/>
            <person name="Lazarevic V."/>
            <person name="Lee S.-M."/>
            <person name="Levine A."/>
            <person name="Liu H."/>
            <person name="Masuda S."/>
            <person name="Mauel C."/>
            <person name="Medigue C."/>
            <person name="Medina N."/>
            <person name="Mellado R.P."/>
            <person name="Mizuno M."/>
            <person name="Moestl D."/>
            <person name="Nakai S."/>
            <person name="Noback M."/>
            <person name="Noone D."/>
            <person name="O'Reilly M."/>
            <person name="Ogawa K."/>
            <person name="Ogiwara A."/>
            <person name="Oudega B."/>
            <person name="Park S.-H."/>
            <person name="Parro V."/>
            <person name="Pohl T.M."/>
            <person name="Portetelle D."/>
            <person name="Porwollik S."/>
            <person name="Prescott A.M."/>
            <person name="Presecan E."/>
            <person name="Pujic P."/>
            <person name="Purnelle B."/>
            <person name="Rapoport G."/>
            <person name="Rey M."/>
            <person name="Reynolds S."/>
            <person name="Rieger M."/>
            <person name="Rivolta C."/>
            <person name="Rocha E."/>
            <person name="Roche B."/>
            <person name="Rose M."/>
            <person name="Sadaie Y."/>
            <person name="Sato T."/>
            <person name="Scanlan E."/>
            <person name="Schleich S."/>
            <person name="Schroeter R."/>
            <person name="Scoffone F."/>
            <person name="Sekiguchi J."/>
            <person name="Sekowska A."/>
            <person name="Seror S.J."/>
            <person name="Serror P."/>
            <person name="Shin B.-S."/>
            <person name="Soldo B."/>
            <person name="Sorokin A."/>
            <person name="Tacconi E."/>
            <person name="Takagi T."/>
            <person name="Takahashi H."/>
            <person name="Takemaru K."/>
            <person name="Takeuchi M."/>
            <person name="Tamakoshi A."/>
            <person name="Tanaka T."/>
            <person name="Terpstra P."/>
            <person name="Tognoni A."/>
            <person name="Tosato V."/>
            <person name="Uchiyama S."/>
            <person name="Vandenbol M."/>
            <person name="Vannier F."/>
            <person name="Vassarotti A."/>
            <person name="Viari A."/>
            <person name="Wambutt R."/>
            <person name="Wedler E."/>
            <person name="Wedler H."/>
            <person name="Weitzenegger T."/>
            <person name="Winters P."/>
            <person name="Wipat A."/>
            <person name="Yamamoto H."/>
            <person name="Yamane K."/>
            <person name="Yasumoto K."/>
            <person name="Yata K."/>
            <person name="Yoshida K."/>
            <person name="Yoshikawa H.-F."/>
            <person name="Zumstein E."/>
            <person name="Yoshikawa H."/>
            <person name="Danchin A."/>
        </authorList>
    </citation>
    <scope>NUCLEOTIDE SEQUENCE [LARGE SCALE GENOMIC DNA]</scope>
    <source>
        <strain>168</strain>
    </source>
</reference>
<reference key="4">
    <citation type="journal article" date="2002" name="Proteomics">
        <title>Stabilization of cell wall proteins in Bacillus subtilis: a proteomic approach.</title>
        <authorList>
            <person name="Antelmann H."/>
            <person name="Yamamoto H."/>
            <person name="Sekiguchi J."/>
            <person name="Hecker M."/>
        </authorList>
    </citation>
    <scope>PROTEIN SEQUENCE OF N-TERMINUS</scope>
    <scope>IDENTIFICATION BY MASS SPECTROMETRY</scope>
    <scope>INDUCTION</scope>
    <scope>SUBCELLULAR LOCATION</scope>
    <source>
        <strain>168</strain>
    </source>
</reference>
<keyword id="KW-1003">Cell membrane</keyword>
<keyword id="KW-0134">Cell wall</keyword>
<keyword id="KW-0961">Cell wall biogenesis/degradation</keyword>
<keyword id="KW-0903">Direct protein sequencing</keyword>
<keyword id="KW-0472">Membrane</keyword>
<keyword id="KW-1185">Reference proteome</keyword>
<keyword id="KW-0677">Repeat</keyword>
<keyword id="KW-0964">Secreted</keyword>
<keyword id="KW-0732">Signal</keyword>
<name>CWBA_BACSU</name>
<sequence length="705" mass="76729">MKSCKQLIVCSLAAILLLIPSVSFAADSNISVKLLNYIGNKSSISLSPTGFYKVTGDNVAVTDRFAGASRYETATLASNSQWKNPNTVILVNRDIFIDALPVIPLAKKLNAPVLFTQPDTLTKTTERQIAKFNPDNILIIGGARSISKDVENKLKSYGAVKRISGKNRYVLSENIAKQMGSYDKAIVVTGRVFQDALAIAPYAAAHGYPILLTEKDKLPDYDLPKQVIIIGSSFSVSDSVENQIKKTSTVQRIPGSTRYELTANIIKQLKLKADKVVMTNGTKYADVLIGASLASKKNSQILFVKQDSVPAAAKSITKDKATYAYDFIGSTSSISAEVENSLADEFYLADGGTYNLKINSGKLNLENIKTYGNSLRIKPENYSTSNRISLDGKQYLGTVNFSIESTKYIRPVNENIPFEDYLKGVIPNEMPASWSLEALKAQTVAARTYSITKTGTTVPDTTAFQVYGGYSWNSNTNKAVEQTKGKVLKYNGSLITAAYSSSNGGYTEASNEVWSSSVPYLIAKKDTKDPQIGWTLTLSKQQLDTKSLDLTKPSSWWSSATETDSARLSGVKNWILKNKETSADSVKIASIDDLSFSGTTQGQRAKTASMKVKYFVKSSTGSYNLSKITTISVPTSELRTMIGATVFKSTYVTVKKDTSKYTISGKGYGHGIGMSQYGAKARAEAGDSYSSILKFYYPGTTLTSY</sequence>
<organism>
    <name type="scientific">Bacillus subtilis (strain 168)</name>
    <dbReference type="NCBI Taxonomy" id="224308"/>
    <lineage>
        <taxon>Bacteria</taxon>
        <taxon>Bacillati</taxon>
        <taxon>Bacillota</taxon>
        <taxon>Bacilli</taxon>
        <taxon>Bacillales</taxon>
        <taxon>Bacillaceae</taxon>
        <taxon>Bacillus</taxon>
    </lineage>
</organism>